<comment type="function">
    <text evidence="1">Specifically methylates position 2 of adenine 2503 in 23S rRNA and position 2 of adenine 37 in tRNAs. m2A2503 modification seems to play a crucial role in the proofreading step occurring at the peptidyl transferase center and thus would serve to optimize ribosomal fidelity.</text>
</comment>
<comment type="catalytic activity">
    <reaction evidence="1">
        <text>adenosine(2503) in 23S rRNA + 2 reduced [2Fe-2S]-[ferredoxin] + 2 S-adenosyl-L-methionine = 2-methyladenosine(2503) in 23S rRNA + 5'-deoxyadenosine + L-methionine + 2 oxidized [2Fe-2S]-[ferredoxin] + S-adenosyl-L-homocysteine</text>
        <dbReference type="Rhea" id="RHEA:42916"/>
        <dbReference type="Rhea" id="RHEA-COMP:10000"/>
        <dbReference type="Rhea" id="RHEA-COMP:10001"/>
        <dbReference type="Rhea" id="RHEA-COMP:10152"/>
        <dbReference type="Rhea" id="RHEA-COMP:10282"/>
        <dbReference type="ChEBI" id="CHEBI:17319"/>
        <dbReference type="ChEBI" id="CHEBI:33737"/>
        <dbReference type="ChEBI" id="CHEBI:33738"/>
        <dbReference type="ChEBI" id="CHEBI:57844"/>
        <dbReference type="ChEBI" id="CHEBI:57856"/>
        <dbReference type="ChEBI" id="CHEBI:59789"/>
        <dbReference type="ChEBI" id="CHEBI:74411"/>
        <dbReference type="ChEBI" id="CHEBI:74497"/>
        <dbReference type="EC" id="2.1.1.192"/>
    </reaction>
</comment>
<comment type="catalytic activity">
    <reaction evidence="1">
        <text>adenosine(37) in tRNA + 2 reduced [2Fe-2S]-[ferredoxin] + 2 S-adenosyl-L-methionine = 2-methyladenosine(37) in tRNA + 5'-deoxyadenosine + L-methionine + 2 oxidized [2Fe-2S]-[ferredoxin] + S-adenosyl-L-homocysteine</text>
        <dbReference type="Rhea" id="RHEA:43332"/>
        <dbReference type="Rhea" id="RHEA-COMP:10000"/>
        <dbReference type="Rhea" id="RHEA-COMP:10001"/>
        <dbReference type="Rhea" id="RHEA-COMP:10162"/>
        <dbReference type="Rhea" id="RHEA-COMP:10485"/>
        <dbReference type="ChEBI" id="CHEBI:17319"/>
        <dbReference type="ChEBI" id="CHEBI:33737"/>
        <dbReference type="ChEBI" id="CHEBI:33738"/>
        <dbReference type="ChEBI" id="CHEBI:57844"/>
        <dbReference type="ChEBI" id="CHEBI:57856"/>
        <dbReference type="ChEBI" id="CHEBI:59789"/>
        <dbReference type="ChEBI" id="CHEBI:74411"/>
        <dbReference type="ChEBI" id="CHEBI:74497"/>
        <dbReference type="EC" id="2.1.1.192"/>
    </reaction>
</comment>
<comment type="cofactor">
    <cofactor evidence="1">
        <name>[4Fe-4S] cluster</name>
        <dbReference type="ChEBI" id="CHEBI:49883"/>
    </cofactor>
    <text evidence="1">Binds 1 [4Fe-4S] cluster. The cluster is coordinated with 3 cysteines and an exchangeable S-adenosyl-L-methionine.</text>
</comment>
<comment type="subcellular location">
    <subcellularLocation>
        <location evidence="1">Cytoplasm</location>
    </subcellularLocation>
</comment>
<comment type="miscellaneous">
    <text evidence="1">Reaction proceeds by a ping-pong mechanism involving intermediate methylation of a conserved cysteine residue.</text>
</comment>
<comment type="similarity">
    <text evidence="1">Belongs to the radical SAM superfamily. RlmN family.</text>
</comment>
<gene>
    <name evidence="1" type="primary">rlmN</name>
    <name type="ordered locus">FTM_0895</name>
</gene>
<proteinExistence type="inferred from homology"/>
<dbReference type="EC" id="2.1.1.192" evidence="1"/>
<dbReference type="EMBL" id="CP000915">
    <property type="protein sequence ID" value="ACD30833.1"/>
    <property type="molecule type" value="Genomic_DNA"/>
</dbReference>
<dbReference type="SMR" id="B2SGH6"/>
<dbReference type="KEGG" id="ftm:FTM_0895"/>
<dbReference type="HOGENOM" id="CLU_029101_0_0_6"/>
<dbReference type="GO" id="GO:0005737">
    <property type="term" value="C:cytoplasm"/>
    <property type="evidence" value="ECO:0007669"/>
    <property type="project" value="UniProtKB-SubCell"/>
</dbReference>
<dbReference type="GO" id="GO:0051539">
    <property type="term" value="F:4 iron, 4 sulfur cluster binding"/>
    <property type="evidence" value="ECO:0007669"/>
    <property type="project" value="UniProtKB-UniRule"/>
</dbReference>
<dbReference type="GO" id="GO:0046872">
    <property type="term" value="F:metal ion binding"/>
    <property type="evidence" value="ECO:0007669"/>
    <property type="project" value="UniProtKB-KW"/>
</dbReference>
<dbReference type="GO" id="GO:0070040">
    <property type="term" value="F:rRNA (adenine(2503)-C2-)-methyltransferase activity"/>
    <property type="evidence" value="ECO:0007669"/>
    <property type="project" value="UniProtKB-UniRule"/>
</dbReference>
<dbReference type="GO" id="GO:0019843">
    <property type="term" value="F:rRNA binding"/>
    <property type="evidence" value="ECO:0007669"/>
    <property type="project" value="UniProtKB-UniRule"/>
</dbReference>
<dbReference type="GO" id="GO:0002935">
    <property type="term" value="F:tRNA (adenine(37)-C2)-methyltransferase activity"/>
    <property type="evidence" value="ECO:0007669"/>
    <property type="project" value="UniProtKB-UniRule"/>
</dbReference>
<dbReference type="GO" id="GO:0000049">
    <property type="term" value="F:tRNA binding"/>
    <property type="evidence" value="ECO:0007669"/>
    <property type="project" value="UniProtKB-UniRule"/>
</dbReference>
<dbReference type="GO" id="GO:0070475">
    <property type="term" value="P:rRNA base methylation"/>
    <property type="evidence" value="ECO:0007669"/>
    <property type="project" value="UniProtKB-UniRule"/>
</dbReference>
<dbReference type="GO" id="GO:0030488">
    <property type="term" value="P:tRNA methylation"/>
    <property type="evidence" value="ECO:0007669"/>
    <property type="project" value="UniProtKB-UniRule"/>
</dbReference>
<dbReference type="CDD" id="cd01335">
    <property type="entry name" value="Radical_SAM"/>
    <property type="match status" value="1"/>
</dbReference>
<dbReference type="FunFam" id="1.10.150.530:FF:000003">
    <property type="entry name" value="Dual-specificity RNA methyltransferase RlmN"/>
    <property type="match status" value="1"/>
</dbReference>
<dbReference type="FunFam" id="3.20.20.70:FF:000008">
    <property type="entry name" value="Dual-specificity RNA methyltransferase RlmN"/>
    <property type="match status" value="1"/>
</dbReference>
<dbReference type="Gene3D" id="1.10.150.530">
    <property type="match status" value="1"/>
</dbReference>
<dbReference type="Gene3D" id="3.20.20.70">
    <property type="entry name" value="Aldolase class I"/>
    <property type="match status" value="1"/>
</dbReference>
<dbReference type="HAMAP" id="MF_01849">
    <property type="entry name" value="RNA_methyltr_RlmN"/>
    <property type="match status" value="1"/>
</dbReference>
<dbReference type="InterPro" id="IPR013785">
    <property type="entry name" value="Aldolase_TIM"/>
</dbReference>
<dbReference type="InterPro" id="IPR006638">
    <property type="entry name" value="Elp3/MiaA/NifB-like_rSAM"/>
</dbReference>
<dbReference type="InterPro" id="IPR040072">
    <property type="entry name" value="Methyltransferase_A"/>
</dbReference>
<dbReference type="InterPro" id="IPR048641">
    <property type="entry name" value="RlmN_N"/>
</dbReference>
<dbReference type="InterPro" id="IPR027492">
    <property type="entry name" value="RNA_MTrfase_RlmN"/>
</dbReference>
<dbReference type="InterPro" id="IPR004383">
    <property type="entry name" value="rRNA_lsu_MTrfase_RlmN/Cfr"/>
</dbReference>
<dbReference type="InterPro" id="IPR007197">
    <property type="entry name" value="rSAM"/>
</dbReference>
<dbReference type="NCBIfam" id="TIGR00048">
    <property type="entry name" value="rRNA_mod_RlmN"/>
    <property type="match status" value="1"/>
</dbReference>
<dbReference type="PANTHER" id="PTHR30544">
    <property type="entry name" value="23S RRNA METHYLTRANSFERASE"/>
    <property type="match status" value="1"/>
</dbReference>
<dbReference type="PANTHER" id="PTHR30544:SF5">
    <property type="entry name" value="RADICAL SAM CORE DOMAIN-CONTAINING PROTEIN"/>
    <property type="match status" value="1"/>
</dbReference>
<dbReference type="Pfam" id="PF04055">
    <property type="entry name" value="Radical_SAM"/>
    <property type="match status" value="1"/>
</dbReference>
<dbReference type="Pfam" id="PF21016">
    <property type="entry name" value="RlmN_N"/>
    <property type="match status" value="1"/>
</dbReference>
<dbReference type="PIRSF" id="PIRSF006004">
    <property type="entry name" value="CHP00048"/>
    <property type="match status" value="1"/>
</dbReference>
<dbReference type="SFLD" id="SFLDF00275">
    <property type="entry name" value="adenosine_C2_methyltransferase"/>
    <property type="match status" value="1"/>
</dbReference>
<dbReference type="SFLD" id="SFLDG01082">
    <property type="entry name" value="B12-binding_domain_containing"/>
    <property type="match status" value="1"/>
</dbReference>
<dbReference type="SFLD" id="SFLDG01062">
    <property type="entry name" value="methyltransferase_(Class_A)"/>
    <property type="match status" value="1"/>
</dbReference>
<dbReference type="SMART" id="SM00729">
    <property type="entry name" value="Elp3"/>
    <property type="match status" value="1"/>
</dbReference>
<dbReference type="SUPFAM" id="SSF102114">
    <property type="entry name" value="Radical SAM enzymes"/>
    <property type="match status" value="1"/>
</dbReference>
<dbReference type="PROSITE" id="PS51918">
    <property type="entry name" value="RADICAL_SAM"/>
    <property type="match status" value="1"/>
</dbReference>
<reference key="1">
    <citation type="journal article" date="2009" name="PLoS Pathog.">
        <title>Molecular evolutionary consequences of niche restriction in Francisella tularensis, a facultative intracellular pathogen.</title>
        <authorList>
            <person name="Larsson P."/>
            <person name="Elfsmark D."/>
            <person name="Svensson K."/>
            <person name="Wikstroem P."/>
            <person name="Forsman M."/>
            <person name="Brettin T."/>
            <person name="Keim P."/>
            <person name="Johansson A."/>
        </authorList>
    </citation>
    <scope>NUCLEOTIDE SEQUENCE [LARGE SCALE GENOMIC DNA]</scope>
    <source>
        <strain>FSC147</strain>
    </source>
</reference>
<organism>
    <name type="scientific">Francisella tularensis subsp. mediasiatica (strain FSC147)</name>
    <dbReference type="NCBI Taxonomy" id="441952"/>
    <lineage>
        <taxon>Bacteria</taxon>
        <taxon>Pseudomonadati</taxon>
        <taxon>Pseudomonadota</taxon>
        <taxon>Gammaproteobacteria</taxon>
        <taxon>Thiotrichales</taxon>
        <taxon>Francisellaceae</taxon>
        <taxon>Francisella</taxon>
    </lineage>
</organism>
<evidence type="ECO:0000255" key="1">
    <source>
        <dbReference type="HAMAP-Rule" id="MF_01849"/>
    </source>
</evidence>
<evidence type="ECO:0000255" key="2">
    <source>
        <dbReference type="PROSITE-ProRule" id="PRU01266"/>
    </source>
</evidence>
<protein>
    <recommendedName>
        <fullName evidence="1">Dual-specificity RNA methyltransferase RlmN</fullName>
        <ecNumber evidence="1">2.1.1.192</ecNumber>
    </recommendedName>
    <alternativeName>
        <fullName evidence="1">23S rRNA (adenine(2503)-C(2))-methyltransferase</fullName>
    </alternativeName>
    <alternativeName>
        <fullName evidence="1">23S rRNA m2A2503 methyltransferase</fullName>
    </alternativeName>
    <alternativeName>
        <fullName evidence="1">Ribosomal RNA large subunit methyltransferase N</fullName>
    </alternativeName>
    <alternativeName>
        <fullName evidence="1">tRNA (adenine(37)-C(2))-methyltransferase</fullName>
    </alternativeName>
    <alternativeName>
        <fullName evidence="1">tRNA m2A37 methyltransferase</fullName>
    </alternativeName>
</protein>
<name>RLMN_FRATM</name>
<feature type="chain" id="PRO_0000350183" description="Dual-specificity RNA methyltransferase RlmN">
    <location>
        <begin position="1"/>
        <end position="370"/>
    </location>
</feature>
<feature type="domain" description="Radical SAM core" evidence="2">
    <location>
        <begin position="99"/>
        <end position="337"/>
    </location>
</feature>
<feature type="active site" description="Proton acceptor" evidence="1">
    <location>
        <position position="93"/>
    </location>
</feature>
<feature type="active site" description="S-methylcysteine intermediate" evidence="1">
    <location>
        <position position="343"/>
    </location>
</feature>
<feature type="binding site" evidence="1">
    <location>
        <position position="113"/>
    </location>
    <ligand>
        <name>[4Fe-4S] cluster</name>
        <dbReference type="ChEBI" id="CHEBI:49883"/>
        <note>4Fe-4S-S-AdoMet</note>
    </ligand>
</feature>
<feature type="binding site" evidence="1">
    <location>
        <position position="117"/>
    </location>
    <ligand>
        <name>[4Fe-4S] cluster</name>
        <dbReference type="ChEBI" id="CHEBI:49883"/>
        <note>4Fe-4S-S-AdoMet</note>
    </ligand>
</feature>
<feature type="binding site" evidence="1">
    <location>
        <position position="120"/>
    </location>
    <ligand>
        <name>[4Fe-4S] cluster</name>
        <dbReference type="ChEBI" id="CHEBI:49883"/>
        <note>4Fe-4S-S-AdoMet</note>
    </ligand>
</feature>
<feature type="binding site" evidence="1">
    <location>
        <begin position="167"/>
        <end position="168"/>
    </location>
    <ligand>
        <name>S-adenosyl-L-methionine</name>
        <dbReference type="ChEBI" id="CHEBI:59789"/>
    </ligand>
</feature>
<feature type="binding site" evidence="1">
    <location>
        <position position="199"/>
    </location>
    <ligand>
        <name>S-adenosyl-L-methionine</name>
        <dbReference type="ChEBI" id="CHEBI:59789"/>
    </ligand>
</feature>
<feature type="binding site" evidence="1">
    <location>
        <begin position="221"/>
        <end position="223"/>
    </location>
    <ligand>
        <name>S-adenosyl-L-methionine</name>
        <dbReference type="ChEBI" id="CHEBI:59789"/>
    </ligand>
</feature>
<feature type="binding site" evidence="1">
    <location>
        <position position="300"/>
    </location>
    <ligand>
        <name>S-adenosyl-L-methionine</name>
        <dbReference type="ChEBI" id="CHEBI:59789"/>
    </ligand>
</feature>
<feature type="disulfide bond" description="(transient)" evidence="1">
    <location>
        <begin position="106"/>
        <end position="343"/>
    </location>
</feature>
<sequence length="370" mass="41448">MQQDKVNLLGLNQKAIEDFFISIGEKKFHARQVFKWIHKKGVIDFDAMTDLGKNLRHKLKEKAQITIPKVVFSKASKDGTHKWLIDVGGSAVETVFIPEEGRGTLCVSSQVGCTLNCSFCSTGKQGFNRNLSAAEVIAQLWIAARTLSKTDGEHDFTVTNIVMMGMGEPLMNFENVVPAMDIMMDDLAYGLSRRKVTLSTSGVVPRIYDLLEQSGVSLAVSLHAPNDMLRNEIVPINKKYNIDELLEACKLYAQNGPHKHITFEYTLMEEVNDNLSDAEELVALLKSREVPAKINLIPFNPYPGTPYKKPSNNRIHRFKEFLQHNGFVTTVRKTRGDDIDAACGQLAGDVMDKTNRKQRYLKKLGDTNAN</sequence>
<keyword id="KW-0004">4Fe-4S</keyword>
<keyword id="KW-0963">Cytoplasm</keyword>
<keyword id="KW-1015">Disulfide bond</keyword>
<keyword id="KW-0408">Iron</keyword>
<keyword id="KW-0411">Iron-sulfur</keyword>
<keyword id="KW-0479">Metal-binding</keyword>
<keyword id="KW-0489">Methyltransferase</keyword>
<keyword id="KW-0698">rRNA processing</keyword>
<keyword id="KW-0949">S-adenosyl-L-methionine</keyword>
<keyword id="KW-0808">Transferase</keyword>
<keyword id="KW-0819">tRNA processing</keyword>
<accession>B2SGH6</accession>